<gene>
    <name type="primary">SDH1-2</name>
    <name type="ordered locus">At2g18450</name>
    <name type="ORF">T30D6.4</name>
</gene>
<dbReference type="EC" id="1.3.5.1" evidence="1"/>
<dbReference type="EMBL" id="AC006439">
    <property type="protein sequence ID" value="AAD15493.1"/>
    <property type="molecule type" value="Genomic_DNA"/>
</dbReference>
<dbReference type="EMBL" id="CP002685">
    <property type="protein sequence ID" value="AEC06769.1"/>
    <property type="molecule type" value="Genomic_DNA"/>
</dbReference>
<dbReference type="EMBL" id="AK119142">
    <property type="protein sequence ID" value="BAC43712.1"/>
    <property type="molecule type" value="mRNA"/>
</dbReference>
<dbReference type="EMBL" id="BT005938">
    <property type="protein sequence ID" value="AAO64873.1"/>
    <property type="molecule type" value="mRNA"/>
</dbReference>
<dbReference type="PIR" id="D84564">
    <property type="entry name" value="D84564"/>
</dbReference>
<dbReference type="RefSeq" id="NP_179435.1">
    <property type="nucleotide sequence ID" value="NM_127401.3"/>
</dbReference>
<dbReference type="SMR" id="Q9ZPX5"/>
<dbReference type="BioGRID" id="1716">
    <property type="interactions" value="6"/>
</dbReference>
<dbReference type="FunCoup" id="Q9ZPX5">
    <property type="interactions" value="1887"/>
</dbReference>
<dbReference type="STRING" id="3702.Q9ZPX5"/>
<dbReference type="iPTMnet" id="Q9ZPX5"/>
<dbReference type="PaxDb" id="3702-AT2G18450.1"/>
<dbReference type="ProteomicsDB" id="232968"/>
<dbReference type="EnsemblPlants" id="AT2G18450.1">
    <property type="protein sequence ID" value="AT2G18450.1"/>
    <property type="gene ID" value="AT2G18450"/>
</dbReference>
<dbReference type="GeneID" id="816359"/>
<dbReference type="Gramene" id="AT2G18450.1">
    <property type="protein sequence ID" value="AT2G18450.1"/>
    <property type="gene ID" value="AT2G18450"/>
</dbReference>
<dbReference type="KEGG" id="ath:AT2G18450"/>
<dbReference type="Araport" id="AT2G18450"/>
<dbReference type="TAIR" id="AT2G18450">
    <property type="gene designation" value="SDH1-2"/>
</dbReference>
<dbReference type="eggNOG" id="KOG2403">
    <property type="taxonomic scope" value="Eukaryota"/>
</dbReference>
<dbReference type="HOGENOM" id="CLU_014312_6_1_1"/>
<dbReference type="InParanoid" id="Q9ZPX5"/>
<dbReference type="OMA" id="MWRCLRV"/>
<dbReference type="PhylomeDB" id="Q9ZPX5"/>
<dbReference type="UniPathway" id="UPA00223">
    <property type="reaction ID" value="UER01006"/>
</dbReference>
<dbReference type="PRO" id="PR:Q9ZPX5"/>
<dbReference type="Proteomes" id="UP000006548">
    <property type="component" value="Chromosome 2"/>
</dbReference>
<dbReference type="ExpressionAtlas" id="Q9ZPX5">
    <property type="expression patterns" value="baseline and differential"/>
</dbReference>
<dbReference type="GO" id="GO:0005743">
    <property type="term" value="C:mitochondrial inner membrane"/>
    <property type="evidence" value="ECO:0007669"/>
    <property type="project" value="UniProtKB-SubCell"/>
</dbReference>
<dbReference type="GO" id="GO:0005739">
    <property type="term" value="C:mitochondrion"/>
    <property type="evidence" value="ECO:0000314"/>
    <property type="project" value="TAIR"/>
</dbReference>
<dbReference type="GO" id="GO:0045273">
    <property type="term" value="C:respiratory chain complex II (succinate dehydrogenase)"/>
    <property type="evidence" value="ECO:0000314"/>
    <property type="project" value="UniProtKB"/>
</dbReference>
<dbReference type="GO" id="GO:0050660">
    <property type="term" value="F:flavin adenine dinucleotide binding"/>
    <property type="evidence" value="ECO:0007669"/>
    <property type="project" value="InterPro"/>
</dbReference>
<dbReference type="GO" id="GO:0008177">
    <property type="term" value="F:succinate dehydrogenase (quinone) activity"/>
    <property type="evidence" value="ECO:0007669"/>
    <property type="project" value="UniProtKB-EC"/>
</dbReference>
<dbReference type="GO" id="GO:0000104">
    <property type="term" value="F:succinate dehydrogenase activity"/>
    <property type="evidence" value="ECO:0000304"/>
    <property type="project" value="TAIR"/>
</dbReference>
<dbReference type="GO" id="GO:0006121">
    <property type="term" value="P:mitochondrial electron transport, succinate to ubiquinone"/>
    <property type="evidence" value="ECO:0000304"/>
    <property type="project" value="TAIR"/>
</dbReference>
<dbReference type="GO" id="GO:0006099">
    <property type="term" value="P:tricarboxylic acid cycle"/>
    <property type="evidence" value="ECO:0007669"/>
    <property type="project" value="UniProtKB-UniPathway"/>
</dbReference>
<dbReference type="FunFam" id="3.90.700.10:FF:000001">
    <property type="entry name" value="Mitochondrial succinate dehydrogenase flavoprotein subunit"/>
    <property type="match status" value="1"/>
</dbReference>
<dbReference type="FunFam" id="3.50.50.60:FF:000405">
    <property type="entry name" value="Succinate dehydrogenase [ubiquinone] flavoprotein subunit, mitochondrial"/>
    <property type="match status" value="1"/>
</dbReference>
<dbReference type="FunFam" id="4.10.80.40:FF:000002">
    <property type="entry name" value="Succinate dehydrogenase [ubiquinone] flavoprotein subunit, mitochondrial"/>
    <property type="match status" value="1"/>
</dbReference>
<dbReference type="FunFam" id="3.50.50.60:FF:000482">
    <property type="entry name" value="Succinate dehydrogenase complex, subunit A, flavoprotein (Fp)"/>
    <property type="match status" value="1"/>
</dbReference>
<dbReference type="FunFam" id="1.20.58.100:FF:000001">
    <property type="entry name" value="Succinate dehydrogenase flavoprotein subunit (SdhA)"/>
    <property type="match status" value="1"/>
</dbReference>
<dbReference type="Gene3D" id="3.50.50.60">
    <property type="entry name" value="FAD/NAD(P)-binding domain"/>
    <property type="match status" value="1"/>
</dbReference>
<dbReference type="Gene3D" id="1.20.58.100">
    <property type="entry name" value="Fumarate reductase/succinate dehydrogenase flavoprotein-like, C-terminal domain"/>
    <property type="match status" value="1"/>
</dbReference>
<dbReference type="Gene3D" id="4.10.80.40">
    <property type="entry name" value="succinate dehydrogenase protein domain"/>
    <property type="match status" value="1"/>
</dbReference>
<dbReference type="Gene3D" id="3.90.700.10">
    <property type="entry name" value="Succinate dehydrogenase/fumarate reductase flavoprotein, catalytic domain"/>
    <property type="match status" value="1"/>
</dbReference>
<dbReference type="InterPro" id="IPR003953">
    <property type="entry name" value="FAD-dep_OxRdtase_2_FAD-bd"/>
</dbReference>
<dbReference type="InterPro" id="IPR036188">
    <property type="entry name" value="FAD/NAD-bd_sf"/>
</dbReference>
<dbReference type="InterPro" id="IPR003952">
    <property type="entry name" value="FRD_SDH_FAD_BS"/>
</dbReference>
<dbReference type="InterPro" id="IPR037099">
    <property type="entry name" value="Fum_R/Succ_DH_flav-like_C_sf"/>
</dbReference>
<dbReference type="InterPro" id="IPR015939">
    <property type="entry name" value="Fum_Rdtase/Succ_DH_flav-like_C"/>
</dbReference>
<dbReference type="InterPro" id="IPR030664">
    <property type="entry name" value="SdhA/FrdA/AprA"/>
</dbReference>
<dbReference type="InterPro" id="IPR027477">
    <property type="entry name" value="Succ_DH/fumarate_Rdtase_cat_sf"/>
</dbReference>
<dbReference type="InterPro" id="IPR011281">
    <property type="entry name" value="Succ_DH_flav_su_fwd"/>
</dbReference>
<dbReference type="InterPro" id="IPR014006">
    <property type="entry name" value="Succ_Dhase_FrdA_Gneg"/>
</dbReference>
<dbReference type="NCBIfam" id="TIGR01816">
    <property type="entry name" value="sdhA_forward"/>
    <property type="match status" value="1"/>
</dbReference>
<dbReference type="NCBIfam" id="TIGR01812">
    <property type="entry name" value="sdhA_frdA_Gneg"/>
    <property type="match status" value="1"/>
</dbReference>
<dbReference type="PANTHER" id="PTHR11632">
    <property type="entry name" value="SUCCINATE DEHYDROGENASE 2 FLAVOPROTEIN SUBUNIT"/>
    <property type="match status" value="1"/>
</dbReference>
<dbReference type="PANTHER" id="PTHR11632:SF72">
    <property type="entry name" value="SUCCINATE DEHYDROGENASE [UBIQUINONE] FLAVOPROTEIN SUBUNIT 2, MITOCHONDRIAL"/>
    <property type="match status" value="1"/>
</dbReference>
<dbReference type="Pfam" id="PF00890">
    <property type="entry name" value="FAD_binding_2"/>
    <property type="match status" value="1"/>
</dbReference>
<dbReference type="Pfam" id="PF02910">
    <property type="entry name" value="Succ_DH_flav_C"/>
    <property type="match status" value="1"/>
</dbReference>
<dbReference type="PIRSF" id="PIRSF000171">
    <property type="entry name" value="SDHA_APRA_LASPO"/>
    <property type="match status" value="1"/>
</dbReference>
<dbReference type="SUPFAM" id="SSF51905">
    <property type="entry name" value="FAD/NAD(P)-binding domain"/>
    <property type="match status" value="1"/>
</dbReference>
<dbReference type="SUPFAM" id="SSF46977">
    <property type="entry name" value="Succinate dehydrogenase/fumarate reductase flavoprotein C-terminal domain"/>
    <property type="match status" value="1"/>
</dbReference>
<dbReference type="SUPFAM" id="SSF56425">
    <property type="entry name" value="Succinate dehydrogenase/fumarate reductase flavoprotein, catalytic domain"/>
    <property type="match status" value="1"/>
</dbReference>
<dbReference type="PROSITE" id="PS00504">
    <property type="entry name" value="FRD_SDH_FAD_BINDING"/>
    <property type="match status" value="1"/>
</dbReference>
<name>SDHA2_ARATH</name>
<sequence>MWRCLRVASSSRRSESNGAFITSQLSRFFSAPPSAGDKSSYTIVDHTYDAVVVGAGGAGLRAAIGLSEHGFNTACITKLFPTRSHTVAAQGGINAALGNMSVDDWRWHMYDTVKGSDWLGDQDAIQYMCREAPKAVIELENYGLPFSRTEDGKIYQRAFGGQSLEFGIGGQAYRCACAADRTGHALLHTLYGQAMKHNTQFFVEYFALDLIMNSDGTCQGVIALNMEDGTLHRFHAGSTILATGGYGRAYFSATSAHTCTGDGNAMVARAGLPLQDLEFVQFHPTGIYGAGCLITEGARGEGGILRNSEGEKFMDRYAPTARDLASRDVVSRSMTMEIRQGRGAGPMKDYLYLYLNHLPPEVLKERLPGISETAAIFAGVDVTREPIPVLPTVHYNMGGIPTNYHGEVITLRGDDPDAVVPGLMAAGEAACASVHGANRLGANSLLDIVVFGRACANRVAEIQKPGEKLKPLEKDAGEKSIEWLDRIRNSNGSLPTSKIRLNMQRVMQNNAAVFRTQETLEEGCDLIDKTWDSFGDVKVTDRSMIWNSDLIETMELENLLVNACITMHSAEARKESRGAHAREDFTKRDDANWMKHTLGYWEEGNVKLEYRPVHMKTLDDEVDTFPPKPRVY</sequence>
<evidence type="ECO:0000250" key="1">
    <source>
        <dbReference type="UniProtKB" id="P31040"/>
    </source>
</evidence>
<evidence type="ECO:0000250" key="2">
    <source>
        <dbReference type="UniProtKB" id="Q0QF01"/>
    </source>
</evidence>
<evidence type="ECO:0000250" key="3">
    <source>
        <dbReference type="UniProtKB" id="Q9YHT1"/>
    </source>
</evidence>
<evidence type="ECO:0000255" key="4"/>
<evidence type="ECO:0000269" key="5">
    <source>
    </source>
</evidence>
<evidence type="ECO:0000269" key="6">
    <source>
    </source>
</evidence>
<evidence type="ECO:0000269" key="7">
    <source>
    </source>
</evidence>
<evidence type="ECO:0000305" key="8"/>
<reference key="1">
    <citation type="journal article" date="1999" name="Nature">
        <title>Sequence and analysis of chromosome 2 of the plant Arabidopsis thaliana.</title>
        <authorList>
            <person name="Lin X."/>
            <person name="Kaul S."/>
            <person name="Rounsley S.D."/>
            <person name="Shea T.P."/>
            <person name="Benito M.-I."/>
            <person name="Town C.D."/>
            <person name="Fujii C.Y."/>
            <person name="Mason T.M."/>
            <person name="Bowman C.L."/>
            <person name="Barnstead M.E."/>
            <person name="Feldblyum T.V."/>
            <person name="Buell C.R."/>
            <person name="Ketchum K.A."/>
            <person name="Lee J.J."/>
            <person name="Ronning C.M."/>
            <person name="Koo H.L."/>
            <person name="Moffat K.S."/>
            <person name="Cronin L.A."/>
            <person name="Shen M."/>
            <person name="Pai G."/>
            <person name="Van Aken S."/>
            <person name="Umayam L."/>
            <person name="Tallon L.J."/>
            <person name="Gill J.E."/>
            <person name="Adams M.D."/>
            <person name="Carrera A.J."/>
            <person name="Creasy T.H."/>
            <person name="Goodman H.M."/>
            <person name="Somerville C.R."/>
            <person name="Copenhaver G.P."/>
            <person name="Preuss D."/>
            <person name="Nierman W.C."/>
            <person name="White O."/>
            <person name="Eisen J.A."/>
            <person name="Salzberg S.L."/>
            <person name="Fraser C.M."/>
            <person name="Venter J.C."/>
        </authorList>
    </citation>
    <scope>NUCLEOTIDE SEQUENCE [LARGE SCALE GENOMIC DNA]</scope>
    <source>
        <strain>cv. Columbia</strain>
    </source>
</reference>
<reference key="2">
    <citation type="journal article" date="2017" name="Plant J.">
        <title>Araport11: a complete reannotation of the Arabidopsis thaliana reference genome.</title>
        <authorList>
            <person name="Cheng C.Y."/>
            <person name="Krishnakumar V."/>
            <person name="Chan A.P."/>
            <person name="Thibaud-Nissen F."/>
            <person name="Schobel S."/>
            <person name="Town C.D."/>
        </authorList>
    </citation>
    <scope>GENOME REANNOTATION</scope>
    <source>
        <strain>cv. Columbia</strain>
    </source>
</reference>
<reference key="3">
    <citation type="journal article" date="2002" name="Science">
        <title>Functional annotation of a full-length Arabidopsis cDNA collection.</title>
        <authorList>
            <person name="Seki M."/>
            <person name="Narusaka M."/>
            <person name="Kamiya A."/>
            <person name="Ishida J."/>
            <person name="Satou M."/>
            <person name="Sakurai T."/>
            <person name="Nakajima M."/>
            <person name="Enju A."/>
            <person name="Akiyama K."/>
            <person name="Oono Y."/>
            <person name="Muramatsu M."/>
            <person name="Hayashizaki Y."/>
            <person name="Kawai J."/>
            <person name="Carninci P."/>
            <person name="Itoh M."/>
            <person name="Ishii Y."/>
            <person name="Arakawa T."/>
            <person name="Shibata K."/>
            <person name="Shinagawa A."/>
            <person name="Shinozaki K."/>
        </authorList>
    </citation>
    <scope>NUCLEOTIDE SEQUENCE [LARGE SCALE MRNA]</scope>
    <source>
        <strain>cv. Columbia</strain>
    </source>
</reference>
<reference key="4">
    <citation type="journal article" date="2003" name="Science">
        <title>Empirical analysis of transcriptional activity in the Arabidopsis genome.</title>
        <authorList>
            <person name="Yamada K."/>
            <person name="Lim J."/>
            <person name="Dale J.M."/>
            <person name="Chen H."/>
            <person name="Shinn P."/>
            <person name="Palm C.J."/>
            <person name="Southwick A.M."/>
            <person name="Wu H.C."/>
            <person name="Kim C.J."/>
            <person name="Nguyen M."/>
            <person name="Pham P.K."/>
            <person name="Cheuk R.F."/>
            <person name="Karlin-Newmann G."/>
            <person name="Liu S.X."/>
            <person name="Lam B."/>
            <person name="Sakano H."/>
            <person name="Wu T."/>
            <person name="Yu G."/>
            <person name="Miranda M."/>
            <person name="Quach H.L."/>
            <person name="Tripp M."/>
            <person name="Chang C.H."/>
            <person name="Lee J.M."/>
            <person name="Toriumi M.J."/>
            <person name="Chan M.M."/>
            <person name="Tang C.C."/>
            <person name="Onodera C.S."/>
            <person name="Deng J.M."/>
            <person name="Akiyama K."/>
            <person name="Ansari Y."/>
            <person name="Arakawa T."/>
            <person name="Banh J."/>
            <person name="Banno F."/>
            <person name="Bowser L."/>
            <person name="Brooks S.Y."/>
            <person name="Carninci P."/>
            <person name="Chao Q."/>
            <person name="Choy N."/>
            <person name="Enju A."/>
            <person name="Goldsmith A.D."/>
            <person name="Gurjal M."/>
            <person name="Hansen N.F."/>
            <person name="Hayashizaki Y."/>
            <person name="Johnson-Hopson C."/>
            <person name="Hsuan V.W."/>
            <person name="Iida K."/>
            <person name="Karnes M."/>
            <person name="Khan S."/>
            <person name="Koesema E."/>
            <person name="Ishida J."/>
            <person name="Jiang P.X."/>
            <person name="Jones T."/>
            <person name="Kawai J."/>
            <person name="Kamiya A."/>
            <person name="Meyers C."/>
            <person name="Nakajima M."/>
            <person name="Narusaka M."/>
            <person name="Seki M."/>
            <person name="Sakurai T."/>
            <person name="Satou M."/>
            <person name="Tamse R."/>
            <person name="Vaysberg M."/>
            <person name="Wallender E.K."/>
            <person name="Wong C."/>
            <person name="Yamamura Y."/>
            <person name="Yuan S."/>
            <person name="Shinozaki K."/>
            <person name="Davis R.W."/>
            <person name="Theologis A."/>
            <person name="Ecker J.R."/>
        </authorList>
    </citation>
    <scope>NUCLEOTIDE SEQUENCE [LARGE SCALE MRNA]</scope>
    <source>
        <strain>cv. Columbia</strain>
    </source>
</reference>
<reference key="5">
    <citation type="journal article" date="2002" name="Plant Mol. Biol.">
        <title>The four subunits of mitochondrial respiratory complex II are encoded by multiple nuclear genes and targeted to mitochondria in Arabidopsis thaliana.</title>
        <authorList>
            <person name="Figueroa P."/>
            <person name="Leon G."/>
            <person name="Elorza A."/>
            <person name="Holuigue L."/>
            <person name="Araya A."/>
            <person name="Jordana X."/>
        </authorList>
    </citation>
    <scope>TISSUE SPECIFICITY</scope>
</reference>
<reference key="6">
    <citation type="journal article" date="2004" name="Plant Cell">
        <title>Experimental analysis of the Arabidopsis mitochondrial proteome highlights signaling and regulatory components, provides assessment of targeting prediction programs, and indicates plant-specific mitochondrial proteins.</title>
        <authorList>
            <person name="Heazlewood J.L."/>
            <person name="Tonti-Filippini J.S."/>
            <person name="Gout A.M."/>
            <person name="Day D.A."/>
            <person name="Whelan J."/>
            <person name="Millar A.H."/>
        </authorList>
    </citation>
    <scope>IDENTIFICATION BY MASS SPECTROMETRY</scope>
    <scope>SUBCELLULAR LOCATION [LARGE SCALE ANALYSIS]</scope>
    <source>
        <strain>cv. Landsberg erecta</strain>
    </source>
</reference>
<reference key="7">
    <citation type="journal article" date="2004" name="Plant Mol. Biol.">
        <title>Mitochondrial cytochrome c oxidase and succinate dehydrogenase complexes contain plant specific subunits.</title>
        <authorList>
            <person name="Millar A.H."/>
            <person name="Eubel H."/>
            <person name="Jansch L."/>
            <person name="Kruft V."/>
            <person name="Heazlewood J.L."/>
            <person name="Braun H.P."/>
        </authorList>
    </citation>
    <scope>IDENTIFICATION BY MASS SPECTROMETRY</scope>
    <scope>SUBUNIT</scope>
</reference>
<comment type="function">
    <text evidence="1">Flavoprotein (FP) subunit of succinate dehydrogenase (SDH) that is involved in complex II of the mitochondrial electron transport chain and is responsible for transferring electrons from succinate to ubiquinone (coenzyme Q).</text>
</comment>
<comment type="catalytic activity">
    <reaction evidence="1">
        <text>a quinone + succinate = fumarate + a quinol</text>
        <dbReference type="Rhea" id="RHEA:40523"/>
        <dbReference type="ChEBI" id="CHEBI:24646"/>
        <dbReference type="ChEBI" id="CHEBI:29806"/>
        <dbReference type="ChEBI" id="CHEBI:30031"/>
        <dbReference type="ChEBI" id="CHEBI:132124"/>
        <dbReference type="EC" id="1.3.5.1"/>
    </reaction>
</comment>
<comment type="cofactor">
    <cofactor evidence="2">
        <name>FAD</name>
        <dbReference type="ChEBI" id="CHEBI:57692"/>
    </cofactor>
</comment>
<comment type="pathway">
    <text evidence="1">Carbohydrate metabolism; tricarboxylic acid cycle; fumarate from succinate (eukaryal route): step 1/1.</text>
</comment>
<comment type="subunit">
    <text evidence="7">Component of complex II composed of eight subunits in plants: four classical SDH subunits SDH1, SDH2, SDH3 and SDH4 (a flavoprotein (FP), an iron-sulfur protein (IP), and a cytochrome b composed of a large and a small subunit.), as well as four subunits unknown in mitochondria from bacteria and heterotrophic eukaryotes.</text>
</comment>
<comment type="subcellular location">
    <subcellularLocation>
        <location evidence="6">Mitochondrion inner membrane</location>
        <topology evidence="6">Peripheral membrane protein</topology>
        <orientation evidence="6">Matrix side</orientation>
    </subcellularLocation>
</comment>
<comment type="tissue specificity">
    <text evidence="5">Expressed at a low level.</text>
</comment>
<comment type="similarity">
    <text evidence="8">Belongs to the FAD-dependent oxidoreductase 2 family. FRD/SDH subfamily.</text>
</comment>
<protein>
    <recommendedName>
        <fullName>Succinate dehydrogenase [ubiquinone] flavoprotein subunit 2, mitochondrial</fullName>
        <ecNumber evidence="1">1.3.5.1</ecNumber>
    </recommendedName>
    <alternativeName>
        <fullName>Flavoprotein subunit 2 of complex II</fullName>
        <shortName>FP</shortName>
    </alternativeName>
</protein>
<organism>
    <name type="scientific">Arabidopsis thaliana</name>
    <name type="common">Mouse-ear cress</name>
    <dbReference type="NCBI Taxonomy" id="3702"/>
    <lineage>
        <taxon>Eukaryota</taxon>
        <taxon>Viridiplantae</taxon>
        <taxon>Streptophyta</taxon>
        <taxon>Embryophyta</taxon>
        <taxon>Tracheophyta</taxon>
        <taxon>Spermatophyta</taxon>
        <taxon>Magnoliopsida</taxon>
        <taxon>eudicotyledons</taxon>
        <taxon>Gunneridae</taxon>
        <taxon>Pentapetalae</taxon>
        <taxon>rosids</taxon>
        <taxon>malvids</taxon>
        <taxon>Brassicales</taxon>
        <taxon>Brassicaceae</taxon>
        <taxon>Camelineae</taxon>
        <taxon>Arabidopsis</taxon>
    </lineage>
</organism>
<keyword id="KW-0249">Electron transport</keyword>
<keyword id="KW-0274">FAD</keyword>
<keyword id="KW-0285">Flavoprotein</keyword>
<keyword id="KW-0472">Membrane</keyword>
<keyword id="KW-0496">Mitochondrion</keyword>
<keyword id="KW-0999">Mitochondrion inner membrane</keyword>
<keyword id="KW-0560">Oxidoreductase</keyword>
<keyword id="KW-1185">Reference proteome</keyword>
<keyword id="KW-0809">Transit peptide</keyword>
<keyword id="KW-0813">Transport</keyword>
<keyword id="KW-0816">Tricarboxylic acid cycle</keyword>
<accession>Q9ZPX5</accession>
<proteinExistence type="evidence at protein level"/>
<feature type="transit peptide" description="Mitochondrion" evidence="4">
    <location>
        <begin position="1"/>
        <end position="29"/>
    </location>
</feature>
<feature type="chain" id="PRO_0000247592" description="Succinate dehydrogenase [ubiquinone] flavoprotein subunit 2, mitochondrial">
    <location>
        <begin position="30"/>
        <end position="632"/>
    </location>
</feature>
<feature type="active site" description="Proton acceptor" evidence="3">
    <location>
        <position position="327"/>
    </location>
</feature>
<feature type="binding site" evidence="3">
    <location>
        <begin position="54"/>
        <end position="59"/>
    </location>
    <ligand>
        <name>FAD</name>
        <dbReference type="ChEBI" id="CHEBI:57692"/>
    </ligand>
</feature>
<feature type="binding site" evidence="3">
    <location>
        <begin position="77"/>
        <end position="92"/>
    </location>
    <ligand>
        <name>FAD</name>
        <dbReference type="ChEBI" id="CHEBI:57692"/>
    </ligand>
</feature>
<feature type="binding site" evidence="3">
    <location>
        <position position="262"/>
    </location>
    <ligand>
        <name>FAD</name>
        <dbReference type="ChEBI" id="CHEBI:57692"/>
    </ligand>
</feature>
<feature type="binding site" evidence="3">
    <location>
        <position position="283"/>
    </location>
    <ligand>
        <name>substrate</name>
    </ligand>
</feature>
<feature type="binding site" evidence="3">
    <location>
        <position position="295"/>
    </location>
    <ligand>
        <name>substrate</name>
    </ligand>
</feature>
<feature type="binding site" evidence="3">
    <location>
        <position position="394"/>
    </location>
    <ligand>
        <name>substrate</name>
    </ligand>
</feature>
<feature type="binding site" evidence="3">
    <location>
        <position position="428"/>
    </location>
    <ligand>
        <name>FAD</name>
        <dbReference type="ChEBI" id="CHEBI:57692"/>
    </ligand>
</feature>
<feature type="binding site" evidence="3">
    <location>
        <position position="439"/>
    </location>
    <ligand>
        <name>substrate</name>
    </ligand>
</feature>
<feature type="binding site" evidence="3">
    <location>
        <begin position="444"/>
        <end position="445"/>
    </location>
    <ligand>
        <name>FAD</name>
        <dbReference type="ChEBI" id="CHEBI:57692"/>
    </ligand>
</feature>
<feature type="modified residue" description="Tele-8alpha-FAD histidine" evidence="3">
    <location>
        <position position="85"/>
    </location>
</feature>